<evidence type="ECO:0000250" key="1">
    <source>
        <dbReference type="UniProtKB" id="Q01218"/>
    </source>
</evidence>
<evidence type="ECO:0000255" key="2"/>
<evidence type="ECO:0000255" key="3">
    <source>
        <dbReference type="PROSITE-ProRule" id="PRU00114"/>
    </source>
</evidence>
<evidence type="ECO:0000256" key="4">
    <source>
        <dbReference type="SAM" id="MobiDB-lite"/>
    </source>
</evidence>
<evidence type="ECO:0000305" key="5"/>
<proteinExistence type="evidence at transcript level"/>
<comment type="function">
    <text evidence="1">Prevents cell to cell fusion by interacting with and directing the viral OPG040 protein on the host plasma membrane. The OPG185-OPG040 complex associates with components of the entry fusion complex (EFC) presumably to avoid superinfection and syncytium formation. Via its interaction with C3/VCP protein, protects the infected cell and probably also the extracellular enveloped virus from complement attack.</text>
</comment>
<comment type="subunit">
    <text evidence="1">Heterodimerizes with OPG040. The heterodimer OPG185-OPG040 interacts with components of the entry fusion complex OPG143 and OPG094. Heterodimer with C3/VPC protein; disulfide-linked.</text>
</comment>
<comment type="subcellular location">
    <subcellularLocation>
        <location evidence="1">Virion membrane</location>
        <topology evidence="1">Single-pass type I membrane protein</topology>
    </subcellularLocation>
    <subcellularLocation>
        <location evidence="1">Host membrane</location>
        <topology evidence="1">Single-pass type I membrane protein</topology>
    </subcellularLocation>
    <text evidence="1">Component of extracellular enveloped virus (EEV) but not intracellular mature virus (IMV). Component of the outermost membrane of EEV.</text>
</comment>
<comment type="induction">
    <text>Expressed in the early phase of the viral replicative cycle.</text>
</comment>
<comment type="PTM">
    <text evidence="1">Glycosylated; contains phosphate and sulfate-substituted glycans. O-glycosylation is required for hemagglutination and hemadsorption activities of infected cell membranes.</text>
</comment>
<comment type="similarity">
    <text evidence="5">Belongs to the orthopoxvirus OPG185 family.</text>
</comment>
<feature type="signal peptide" evidence="2">
    <location>
        <begin position="1"/>
        <end position="16"/>
    </location>
</feature>
<feature type="chain" id="PRO_0000040570" description="Protein OPG185">
    <location>
        <begin position="17"/>
        <end position="314"/>
    </location>
</feature>
<feature type="topological domain" description="Virion surface" evidence="2">
    <location>
        <begin position="17"/>
        <end position="278"/>
    </location>
</feature>
<feature type="transmembrane region" description="Helical" evidence="2">
    <location>
        <begin position="279"/>
        <end position="302"/>
    </location>
</feature>
<feature type="topological domain" description="Intravirion" evidence="2">
    <location>
        <begin position="303"/>
        <end position="314"/>
    </location>
</feature>
<feature type="domain" description="Ig-like V-type">
    <location>
        <begin position="17"/>
        <end position="121"/>
    </location>
</feature>
<feature type="region of interest" description="Disordered" evidence="4">
    <location>
        <begin position="192"/>
        <end position="217"/>
    </location>
</feature>
<feature type="glycosylation site" description="N-linked (GlcNAc...) asparagine; by host" evidence="2">
    <location>
        <position position="37"/>
    </location>
</feature>
<feature type="glycosylation site" description="N-linked (GlcNAc...) asparagine; by host" evidence="2">
    <location>
        <position position="38"/>
    </location>
</feature>
<feature type="glycosylation site" description="N-linked (GlcNAc...) asparagine; by host" evidence="2">
    <location>
        <position position="69"/>
    </location>
</feature>
<feature type="glycosylation site" description="N-linked (GlcNAc...) asparagine; by host" evidence="2">
    <location>
        <position position="112"/>
    </location>
</feature>
<feature type="glycosylation site" description="N-linked (GlcNAc...) asparagine; by host" evidence="2">
    <location>
        <position position="161"/>
    </location>
</feature>
<feature type="glycosylation site" description="N-linked (GlcNAc...) asparagine; by host" evidence="2">
    <location>
        <position position="253"/>
    </location>
</feature>
<feature type="disulfide bond" evidence="3">
    <location>
        <begin position="34"/>
        <end position="103"/>
    </location>
</feature>
<organismHost>
    <name type="scientific">Bos taurus</name>
    <name type="common">Bovine</name>
    <dbReference type="NCBI Taxonomy" id="9913"/>
</organismHost>
<organismHost>
    <name type="scientific">Felis catus</name>
    <name type="common">Cat</name>
    <name type="synonym">Felis silvestris catus</name>
    <dbReference type="NCBI Taxonomy" id="9685"/>
</organismHost>
<organismHost>
    <name type="scientific">Homo sapiens</name>
    <name type="common">Human</name>
    <dbReference type="NCBI Taxonomy" id="9606"/>
</organismHost>
<organismHost>
    <name type="scientific">Loxodonta africana</name>
    <name type="common">African elephant</name>
    <dbReference type="NCBI Taxonomy" id="9785"/>
</organismHost>
<organismHost>
    <name type="scientific">Microtus agrestis</name>
    <name type="common">Short-tailed field vole</name>
    <dbReference type="NCBI Taxonomy" id="29092"/>
</organismHost>
<organismHost>
    <name type="scientific">Mus musculus</name>
    <name type="common">Mouse</name>
    <dbReference type="NCBI Taxonomy" id="10090"/>
</organismHost>
<organismHost>
    <name type="scientific">Myodes glareolus</name>
    <name type="common">Bank vole</name>
    <name type="synonym">Clethrionomys glareolus</name>
    <dbReference type="NCBI Taxonomy" id="447135"/>
</organismHost>
<reference key="1">
    <citation type="submission" date="2003-03" db="EMBL/GenBank/DDBJ databases">
        <title>Structure-function and organization of cowpox virus strain GRI-90 complete genome.</title>
        <authorList>
            <person name="Shchelkunov S.N."/>
            <person name="Safronov P.F."/>
            <person name="Totmenin A.V."/>
            <person name="Miheev M.V."/>
            <person name="Ryazankina O.I."/>
            <person name="Petrov N.A."/>
            <person name="Gutorov V.V."/>
            <person name="Kotwal G.J."/>
            <person name="Sandakhchiev L.S."/>
        </authorList>
    </citation>
    <scope>NUCLEOTIDE SEQUENCE [LARGE SCALE GENOMIC DNA]</scope>
</reference>
<protein>
    <recommendedName>
        <fullName>Protein OPG185</fullName>
    </recommendedName>
    <alternativeName>
        <fullName>Hemagglutinin</fullName>
    </alternativeName>
</protein>
<name>HEMA_CWPXG</name>
<organism>
    <name type="scientific">Cowpox virus (strain GRI-90 / Grishak)</name>
    <name type="common">CPV</name>
    <dbReference type="NCBI Taxonomy" id="265871"/>
    <lineage>
        <taxon>Viruses</taxon>
        <taxon>Varidnaviria</taxon>
        <taxon>Bamfordvirae</taxon>
        <taxon>Nucleocytoviricota</taxon>
        <taxon>Pokkesviricetes</taxon>
        <taxon>Chitovirales</taxon>
        <taxon>Poxviridae</taxon>
        <taxon>Chordopoxvirinae</taxon>
        <taxon>Orthopoxvirus</taxon>
        <taxon>Cowpox virus</taxon>
    </lineage>
</organism>
<keyword id="KW-1015">Disulfide bond</keyword>
<keyword id="KW-0244">Early protein</keyword>
<keyword id="KW-0325">Glycoprotein</keyword>
<keyword id="KW-0348">Hemagglutinin</keyword>
<keyword id="KW-1043">Host membrane</keyword>
<keyword id="KW-0393">Immunoglobulin domain</keyword>
<keyword id="KW-0426">Late protein</keyword>
<keyword id="KW-0472">Membrane</keyword>
<keyword id="KW-0732">Signal</keyword>
<keyword id="KW-0812">Transmembrane</keyword>
<keyword id="KW-1133">Transmembrane helix</keyword>
<keyword id="KW-0261">Viral envelope protein</keyword>
<keyword id="KW-0946">Virion</keyword>
<accession>O72737</accession>
<gene>
    <name type="primary">OPG185</name>
    <name type="synonym">HA</name>
    <name type="ORF">A58R</name>
</gene>
<dbReference type="EMBL" id="X94355">
    <property type="protein sequence ID" value="CAD90725.1"/>
    <property type="molecule type" value="Genomic_DNA"/>
</dbReference>
<dbReference type="SMR" id="O72737"/>
<dbReference type="GlyCosmos" id="O72737">
    <property type="glycosylation" value="6 sites, No reported glycans"/>
</dbReference>
<dbReference type="Proteomes" id="UP000137384">
    <property type="component" value="Segment"/>
</dbReference>
<dbReference type="GO" id="GO:0033644">
    <property type="term" value="C:host cell membrane"/>
    <property type="evidence" value="ECO:0007669"/>
    <property type="project" value="UniProtKB-SubCell"/>
</dbReference>
<dbReference type="GO" id="GO:0016020">
    <property type="term" value="C:membrane"/>
    <property type="evidence" value="ECO:0007669"/>
    <property type="project" value="UniProtKB-KW"/>
</dbReference>
<dbReference type="GO" id="GO:0019031">
    <property type="term" value="C:viral envelope"/>
    <property type="evidence" value="ECO:0007669"/>
    <property type="project" value="UniProtKB-KW"/>
</dbReference>
<dbReference type="GO" id="GO:0055036">
    <property type="term" value="C:virion membrane"/>
    <property type="evidence" value="ECO:0007669"/>
    <property type="project" value="UniProtKB-SubCell"/>
</dbReference>
<dbReference type="Gene3D" id="2.60.40.10">
    <property type="entry name" value="Immunoglobulins"/>
    <property type="match status" value="1"/>
</dbReference>
<dbReference type="InterPro" id="IPR007110">
    <property type="entry name" value="Ig-like_dom"/>
</dbReference>
<dbReference type="InterPro" id="IPR036179">
    <property type="entry name" value="Ig-like_dom_sf"/>
</dbReference>
<dbReference type="InterPro" id="IPR013783">
    <property type="entry name" value="Ig-like_fold"/>
</dbReference>
<dbReference type="InterPro" id="IPR003599">
    <property type="entry name" value="Ig_sub"/>
</dbReference>
<dbReference type="InterPro" id="IPR013106">
    <property type="entry name" value="Ig_V-set"/>
</dbReference>
<dbReference type="Pfam" id="PF07686">
    <property type="entry name" value="V-set"/>
    <property type="match status" value="1"/>
</dbReference>
<dbReference type="SMART" id="SM00409">
    <property type="entry name" value="IG"/>
    <property type="match status" value="1"/>
</dbReference>
<dbReference type="SUPFAM" id="SSF48726">
    <property type="entry name" value="Immunoglobulin"/>
    <property type="match status" value="1"/>
</dbReference>
<dbReference type="PROSITE" id="PS50835">
    <property type="entry name" value="IG_LIKE"/>
    <property type="match status" value="1"/>
</dbReference>
<sequence>MARLPILLLLISLVYSTPSPQTSKKIGDDATLSCNRNNTTDYVVMSAWYKEPNSIILLAAKSDVLYFDNYTKDKISYDSPYDDLVTTITIKSLTARDAGTYVCAFFMTSTTNDTDKVDYEEYSTELIVNTDSESTIDIILSGSTHSPETSSEKPDYIDNSNCSSVFEIATPEPITDNEEDHTDVTYTSENINTVSTTSRESTTDETPEPITDKEEDHTVTDTVSYTTVSTSSGIVTTKSTTDDADLYDTYNDNDTVPPTTVGGSTTSISNYKTKDFVEIFGITALIILSAVAIFCITYYICNKRSRKYKTENKV</sequence>